<organism>
    <name type="scientific">Escherichia coli O6:K15:H31 (strain 536 / UPEC)</name>
    <dbReference type="NCBI Taxonomy" id="362663"/>
    <lineage>
        <taxon>Bacteria</taxon>
        <taxon>Pseudomonadati</taxon>
        <taxon>Pseudomonadota</taxon>
        <taxon>Gammaproteobacteria</taxon>
        <taxon>Enterobacterales</taxon>
        <taxon>Enterobacteriaceae</taxon>
        <taxon>Escherichia</taxon>
    </lineage>
</organism>
<protein>
    <recommendedName>
        <fullName evidence="1">Small ribosomal subunit protein uS4</fullName>
    </recommendedName>
    <alternativeName>
        <fullName evidence="2">30S ribosomal protein S4</fullName>
    </alternativeName>
</protein>
<evidence type="ECO:0000255" key="1">
    <source>
        <dbReference type="HAMAP-Rule" id="MF_01306"/>
    </source>
</evidence>
<evidence type="ECO:0000305" key="2"/>
<comment type="function">
    <text evidence="1">One of the primary rRNA binding proteins, it binds directly to 16S rRNA where it nucleates assembly of the body of the 30S subunit.</text>
</comment>
<comment type="function">
    <text evidence="1">With S5 and S12 plays an important role in translational accuracy.</text>
</comment>
<comment type="subunit">
    <text evidence="1">Part of the 30S ribosomal subunit. Contacts protein S5. The interaction surface between S4 and S5 is involved in control of translational fidelity.</text>
</comment>
<comment type="similarity">
    <text evidence="1">Belongs to the universal ribosomal protein uS4 family.</text>
</comment>
<dbReference type="EMBL" id="CP000247">
    <property type="protein sequence ID" value="ABG71364.1"/>
    <property type="molecule type" value="Genomic_DNA"/>
</dbReference>
<dbReference type="RefSeq" id="WP_000135224.1">
    <property type="nucleotide sequence ID" value="NC_008253.1"/>
</dbReference>
<dbReference type="SMR" id="Q0TCG5"/>
<dbReference type="GeneID" id="93778691"/>
<dbReference type="KEGG" id="ecp:ECP_3384"/>
<dbReference type="HOGENOM" id="CLU_092403_0_2_6"/>
<dbReference type="Proteomes" id="UP000009182">
    <property type="component" value="Chromosome"/>
</dbReference>
<dbReference type="GO" id="GO:0015935">
    <property type="term" value="C:small ribosomal subunit"/>
    <property type="evidence" value="ECO:0007669"/>
    <property type="project" value="InterPro"/>
</dbReference>
<dbReference type="GO" id="GO:0019843">
    <property type="term" value="F:rRNA binding"/>
    <property type="evidence" value="ECO:0007669"/>
    <property type="project" value="UniProtKB-UniRule"/>
</dbReference>
<dbReference type="GO" id="GO:0003735">
    <property type="term" value="F:structural constituent of ribosome"/>
    <property type="evidence" value="ECO:0007669"/>
    <property type="project" value="InterPro"/>
</dbReference>
<dbReference type="GO" id="GO:0042274">
    <property type="term" value="P:ribosomal small subunit biogenesis"/>
    <property type="evidence" value="ECO:0007669"/>
    <property type="project" value="TreeGrafter"/>
</dbReference>
<dbReference type="GO" id="GO:0006412">
    <property type="term" value="P:translation"/>
    <property type="evidence" value="ECO:0007669"/>
    <property type="project" value="UniProtKB-UniRule"/>
</dbReference>
<dbReference type="CDD" id="cd00165">
    <property type="entry name" value="S4"/>
    <property type="match status" value="1"/>
</dbReference>
<dbReference type="FunFam" id="1.10.1050.10:FF:000001">
    <property type="entry name" value="30S ribosomal protein S4"/>
    <property type="match status" value="1"/>
</dbReference>
<dbReference type="FunFam" id="3.10.290.10:FF:000001">
    <property type="entry name" value="30S ribosomal protein S4"/>
    <property type="match status" value="1"/>
</dbReference>
<dbReference type="Gene3D" id="1.10.1050.10">
    <property type="entry name" value="Ribosomal Protein S4 Delta 41, Chain A, domain 1"/>
    <property type="match status" value="1"/>
</dbReference>
<dbReference type="Gene3D" id="3.10.290.10">
    <property type="entry name" value="RNA-binding S4 domain"/>
    <property type="match status" value="1"/>
</dbReference>
<dbReference type="HAMAP" id="MF_01306_B">
    <property type="entry name" value="Ribosomal_uS4_B"/>
    <property type="match status" value="1"/>
</dbReference>
<dbReference type="InterPro" id="IPR022801">
    <property type="entry name" value="Ribosomal_uS4"/>
</dbReference>
<dbReference type="InterPro" id="IPR005709">
    <property type="entry name" value="Ribosomal_uS4_bac-type"/>
</dbReference>
<dbReference type="InterPro" id="IPR018079">
    <property type="entry name" value="Ribosomal_uS4_CS"/>
</dbReference>
<dbReference type="InterPro" id="IPR001912">
    <property type="entry name" value="Ribosomal_uS4_N"/>
</dbReference>
<dbReference type="InterPro" id="IPR002942">
    <property type="entry name" value="S4_RNA-bd"/>
</dbReference>
<dbReference type="InterPro" id="IPR036986">
    <property type="entry name" value="S4_RNA-bd_sf"/>
</dbReference>
<dbReference type="NCBIfam" id="NF003717">
    <property type="entry name" value="PRK05327.1"/>
    <property type="match status" value="1"/>
</dbReference>
<dbReference type="NCBIfam" id="TIGR01017">
    <property type="entry name" value="rpsD_bact"/>
    <property type="match status" value="1"/>
</dbReference>
<dbReference type="PANTHER" id="PTHR11831">
    <property type="entry name" value="30S 40S RIBOSOMAL PROTEIN"/>
    <property type="match status" value="1"/>
</dbReference>
<dbReference type="PANTHER" id="PTHR11831:SF4">
    <property type="entry name" value="SMALL RIBOSOMAL SUBUNIT PROTEIN US4M"/>
    <property type="match status" value="1"/>
</dbReference>
<dbReference type="Pfam" id="PF00163">
    <property type="entry name" value="Ribosomal_S4"/>
    <property type="match status" value="1"/>
</dbReference>
<dbReference type="Pfam" id="PF01479">
    <property type="entry name" value="S4"/>
    <property type="match status" value="1"/>
</dbReference>
<dbReference type="SMART" id="SM01390">
    <property type="entry name" value="Ribosomal_S4"/>
    <property type="match status" value="1"/>
</dbReference>
<dbReference type="SMART" id="SM00363">
    <property type="entry name" value="S4"/>
    <property type="match status" value="1"/>
</dbReference>
<dbReference type="SUPFAM" id="SSF55174">
    <property type="entry name" value="Alpha-L RNA-binding motif"/>
    <property type="match status" value="1"/>
</dbReference>
<dbReference type="PROSITE" id="PS00632">
    <property type="entry name" value="RIBOSOMAL_S4"/>
    <property type="match status" value="1"/>
</dbReference>
<dbReference type="PROSITE" id="PS50889">
    <property type="entry name" value="S4"/>
    <property type="match status" value="1"/>
</dbReference>
<reference key="1">
    <citation type="journal article" date="2006" name="Mol. Microbiol.">
        <title>Role of pathogenicity island-associated integrases in the genome plasticity of uropathogenic Escherichia coli strain 536.</title>
        <authorList>
            <person name="Hochhut B."/>
            <person name="Wilde C."/>
            <person name="Balling G."/>
            <person name="Middendorf B."/>
            <person name="Dobrindt U."/>
            <person name="Brzuszkiewicz E."/>
            <person name="Gottschalk G."/>
            <person name="Carniel E."/>
            <person name="Hacker J."/>
        </authorList>
    </citation>
    <scope>NUCLEOTIDE SEQUENCE [LARGE SCALE GENOMIC DNA]</scope>
    <source>
        <strain>536 / UPEC</strain>
    </source>
</reference>
<feature type="chain" id="PRO_0000293279" description="Small ribosomal subunit protein uS4">
    <location>
        <begin position="1"/>
        <end position="206"/>
    </location>
</feature>
<feature type="domain" description="S4 RNA-binding" evidence="1">
    <location>
        <begin position="96"/>
        <end position="156"/>
    </location>
</feature>
<proteinExistence type="inferred from homology"/>
<accession>Q0TCG5</accession>
<gene>
    <name evidence="1" type="primary">rpsD</name>
    <name type="ordered locus">ECP_3384</name>
</gene>
<keyword id="KW-0687">Ribonucleoprotein</keyword>
<keyword id="KW-0689">Ribosomal protein</keyword>
<keyword id="KW-0694">RNA-binding</keyword>
<keyword id="KW-0699">rRNA-binding</keyword>
<name>RS4_ECOL5</name>
<sequence length="206" mass="23469">MARYLGPKLKLSRREGTDLFLKSGVRAIDTKCKIEQAPGQHGARKPRLSDYGVQLREKQKVRRIYGVLERQFRNYYKEAARLKGNTGENLLALLEGRLDNVVYRMGFGATRAEARQLVSHKAIMVNGRVVNIASYQVSPNDVVSIREKAKKQSRVKAALELAEQREKPTWLEVDAGKMEGTFKRKPERSDLSADINEHLIVELYSK</sequence>